<feature type="chain" id="PRO_0000284343" description="Endoribonuclease YbeY">
    <location>
        <begin position="1"/>
        <end position="160"/>
    </location>
</feature>
<feature type="binding site" evidence="1">
    <location>
        <position position="121"/>
    </location>
    <ligand>
        <name>Zn(2+)</name>
        <dbReference type="ChEBI" id="CHEBI:29105"/>
        <note>catalytic</note>
    </ligand>
</feature>
<feature type="binding site" evidence="1">
    <location>
        <position position="125"/>
    </location>
    <ligand>
        <name>Zn(2+)</name>
        <dbReference type="ChEBI" id="CHEBI:29105"/>
        <note>catalytic</note>
    </ligand>
</feature>
<feature type="binding site" evidence="1">
    <location>
        <position position="131"/>
    </location>
    <ligand>
        <name>Zn(2+)</name>
        <dbReference type="ChEBI" id="CHEBI:29105"/>
        <note>catalytic</note>
    </ligand>
</feature>
<name>YBEY_HYDCU</name>
<evidence type="ECO:0000255" key="1">
    <source>
        <dbReference type="HAMAP-Rule" id="MF_00009"/>
    </source>
</evidence>
<protein>
    <recommendedName>
        <fullName evidence="1">Endoribonuclease YbeY</fullName>
        <ecNumber evidence="1">3.1.-.-</ecNumber>
    </recommendedName>
</protein>
<proteinExistence type="inferred from homology"/>
<keyword id="KW-0963">Cytoplasm</keyword>
<keyword id="KW-0255">Endonuclease</keyword>
<keyword id="KW-0378">Hydrolase</keyword>
<keyword id="KW-0479">Metal-binding</keyword>
<keyword id="KW-0540">Nuclease</keyword>
<keyword id="KW-0690">Ribosome biogenesis</keyword>
<keyword id="KW-0698">rRNA processing</keyword>
<keyword id="KW-0862">Zinc</keyword>
<comment type="function">
    <text evidence="1">Single strand-specific metallo-endoribonuclease involved in late-stage 70S ribosome quality control and in maturation of the 3' terminus of the 16S rRNA.</text>
</comment>
<comment type="cofactor">
    <cofactor evidence="1">
        <name>Zn(2+)</name>
        <dbReference type="ChEBI" id="CHEBI:29105"/>
    </cofactor>
    <text evidence="1">Binds 1 zinc ion.</text>
</comment>
<comment type="subcellular location">
    <subcellularLocation>
        <location evidence="1">Cytoplasm</location>
    </subcellularLocation>
</comment>
<comment type="similarity">
    <text evidence="1">Belongs to the endoribonuclease YbeY family.</text>
</comment>
<dbReference type="EC" id="3.1.-.-" evidence="1"/>
<dbReference type="EMBL" id="CP000109">
    <property type="protein sequence ID" value="ABB41071.1"/>
    <property type="molecule type" value="Genomic_DNA"/>
</dbReference>
<dbReference type="SMR" id="Q31IF2"/>
<dbReference type="STRING" id="317025.Tcr_0475"/>
<dbReference type="KEGG" id="tcx:Tcr_0475"/>
<dbReference type="eggNOG" id="COG0319">
    <property type="taxonomic scope" value="Bacteria"/>
</dbReference>
<dbReference type="HOGENOM" id="CLU_106710_0_1_6"/>
<dbReference type="OrthoDB" id="9807740at2"/>
<dbReference type="GO" id="GO:0005737">
    <property type="term" value="C:cytoplasm"/>
    <property type="evidence" value="ECO:0007669"/>
    <property type="project" value="UniProtKB-SubCell"/>
</dbReference>
<dbReference type="GO" id="GO:0004222">
    <property type="term" value="F:metalloendopeptidase activity"/>
    <property type="evidence" value="ECO:0007669"/>
    <property type="project" value="InterPro"/>
</dbReference>
<dbReference type="GO" id="GO:0004521">
    <property type="term" value="F:RNA endonuclease activity"/>
    <property type="evidence" value="ECO:0007669"/>
    <property type="project" value="UniProtKB-UniRule"/>
</dbReference>
<dbReference type="GO" id="GO:0008270">
    <property type="term" value="F:zinc ion binding"/>
    <property type="evidence" value="ECO:0007669"/>
    <property type="project" value="UniProtKB-UniRule"/>
</dbReference>
<dbReference type="GO" id="GO:0006364">
    <property type="term" value="P:rRNA processing"/>
    <property type="evidence" value="ECO:0007669"/>
    <property type="project" value="UniProtKB-UniRule"/>
</dbReference>
<dbReference type="Gene3D" id="3.40.390.30">
    <property type="entry name" value="Metalloproteases ('zincins'), catalytic domain"/>
    <property type="match status" value="1"/>
</dbReference>
<dbReference type="HAMAP" id="MF_00009">
    <property type="entry name" value="Endoribonucl_YbeY"/>
    <property type="match status" value="1"/>
</dbReference>
<dbReference type="InterPro" id="IPR023091">
    <property type="entry name" value="MetalPrtase_cat_dom_sf_prd"/>
</dbReference>
<dbReference type="InterPro" id="IPR002036">
    <property type="entry name" value="YbeY"/>
</dbReference>
<dbReference type="InterPro" id="IPR020549">
    <property type="entry name" value="YbeY_CS"/>
</dbReference>
<dbReference type="NCBIfam" id="TIGR00043">
    <property type="entry name" value="rRNA maturation RNase YbeY"/>
    <property type="match status" value="1"/>
</dbReference>
<dbReference type="PANTHER" id="PTHR46986">
    <property type="entry name" value="ENDORIBONUCLEASE YBEY, CHLOROPLASTIC"/>
    <property type="match status" value="1"/>
</dbReference>
<dbReference type="PANTHER" id="PTHR46986:SF1">
    <property type="entry name" value="ENDORIBONUCLEASE YBEY, CHLOROPLASTIC"/>
    <property type="match status" value="1"/>
</dbReference>
<dbReference type="Pfam" id="PF02130">
    <property type="entry name" value="YbeY"/>
    <property type="match status" value="1"/>
</dbReference>
<dbReference type="SUPFAM" id="SSF55486">
    <property type="entry name" value="Metalloproteases ('zincins'), catalytic domain"/>
    <property type="match status" value="1"/>
</dbReference>
<dbReference type="PROSITE" id="PS01306">
    <property type="entry name" value="UPF0054"/>
    <property type="match status" value="1"/>
</dbReference>
<accession>Q31IF2</accession>
<gene>
    <name evidence="1" type="primary">ybeY</name>
    <name type="ordered locus">Tcr_0475</name>
</gene>
<organism>
    <name type="scientific">Hydrogenovibrio crunogenus (strain DSM 25203 / XCL-2)</name>
    <name type="common">Thiomicrospira crunogena</name>
    <dbReference type="NCBI Taxonomy" id="317025"/>
    <lineage>
        <taxon>Bacteria</taxon>
        <taxon>Pseudomonadati</taxon>
        <taxon>Pseudomonadota</taxon>
        <taxon>Gammaproteobacteria</taxon>
        <taxon>Thiotrichales</taxon>
        <taxon>Piscirickettsiaceae</taxon>
        <taxon>Hydrogenovibrio</taxon>
    </lineage>
</organism>
<reference key="1">
    <citation type="journal article" date="2006" name="PLoS Biol.">
        <title>The genome of deep-sea vent chemolithoautotroph Thiomicrospira crunogena XCL-2.</title>
        <authorList>
            <person name="Scott K.M."/>
            <person name="Sievert S.M."/>
            <person name="Abril F.N."/>
            <person name="Ball L.A."/>
            <person name="Barrett C.J."/>
            <person name="Blake R.A."/>
            <person name="Boller A.J."/>
            <person name="Chain P.S.G."/>
            <person name="Clark J.A."/>
            <person name="Davis C.R."/>
            <person name="Detter C."/>
            <person name="Do K.F."/>
            <person name="Dobrinski K.P."/>
            <person name="Faza B.I."/>
            <person name="Fitzpatrick K.A."/>
            <person name="Freyermuth S.K."/>
            <person name="Harmer T.L."/>
            <person name="Hauser L.J."/>
            <person name="Huegler M."/>
            <person name="Kerfeld C.A."/>
            <person name="Klotz M.G."/>
            <person name="Kong W.W."/>
            <person name="Land M."/>
            <person name="Lapidus A."/>
            <person name="Larimer F.W."/>
            <person name="Longo D.L."/>
            <person name="Lucas S."/>
            <person name="Malfatti S.A."/>
            <person name="Massey S.E."/>
            <person name="Martin D.D."/>
            <person name="McCuddin Z."/>
            <person name="Meyer F."/>
            <person name="Moore J.L."/>
            <person name="Ocampo L.H. Jr."/>
            <person name="Paul J.H."/>
            <person name="Paulsen I.T."/>
            <person name="Reep D.K."/>
            <person name="Ren Q."/>
            <person name="Ross R.L."/>
            <person name="Sato P.Y."/>
            <person name="Thomas P."/>
            <person name="Tinkham L.E."/>
            <person name="Zeruth G.T."/>
        </authorList>
    </citation>
    <scope>NUCLEOTIDE SEQUENCE [LARGE SCALE GENOMIC DNA]</scope>
    <source>
        <strain>DSM 25203 / XCL-2</strain>
    </source>
</reference>
<sequence length="160" mass="18144">MIHLDYQVAAEEVDEAELPTYEQCLKWVEVALLDDRLDGETELTIRIVDEDEIQTLNRDYRGKDQTTNVLSFPFENPPVLVDLGEELPYIGDLVICAQVVAQEAKAQHKPLEAHWAHMVIHGCLHLQGMDHVDDDEAIKMEALEAEILADLGYDSPYESD</sequence>